<proteinExistence type="inferred from homology"/>
<gene>
    <name type="ordered locus">BCG_3311</name>
</gene>
<accession>A1KNT4</accession>
<comment type="function">
    <text evidence="1">Nucleoside triphosphate pyrophosphatase. May have a dual role in cell division arrest and in preventing the incorporation of modified nucleotides into cellular nucleic acids.</text>
</comment>
<comment type="catalytic activity">
    <reaction evidence="1">
        <text>a ribonucleoside 5'-triphosphate + H2O = a ribonucleoside 5'-phosphate + diphosphate + H(+)</text>
        <dbReference type="Rhea" id="RHEA:23996"/>
        <dbReference type="ChEBI" id="CHEBI:15377"/>
        <dbReference type="ChEBI" id="CHEBI:15378"/>
        <dbReference type="ChEBI" id="CHEBI:33019"/>
        <dbReference type="ChEBI" id="CHEBI:58043"/>
        <dbReference type="ChEBI" id="CHEBI:61557"/>
        <dbReference type="EC" id="3.6.1.9"/>
    </reaction>
</comment>
<comment type="catalytic activity">
    <reaction evidence="1">
        <text>a 2'-deoxyribonucleoside 5'-triphosphate + H2O = a 2'-deoxyribonucleoside 5'-phosphate + diphosphate + H(+)</text>
        <dbReference type="Rhea" id="RHEA:44644"/>
        <dbReference type="ChEBI" id="CHEBI:15377"/>
        <dbReference type="ChEBI" id="CHEBI:15378"/>
        <dbReference type="ChEBI" id="CHEBI:33019"/>
        <dbReference type="ChEBI" id="CHEBI:61560"/>
        <dbReference type="ChEBI" id="CHEBI:65317"/>
        <dbReference type="EC" id="3.6.1.9"/>
    </reaction>
</comment>
<comment type="cofactor">
    <cofactor evidence="1">
        <name>a divalent metal cation</name>
        <dbReference type="ChEBI" id="CHEBI:60240"/>
    </cofactor>
</comment>
<comment type="subcellular location">
    <subcellularLocation>
        <location evidence="1">Cytoplasm</location>
    </subcellularLocation>
</comment>
<comment type="similarity">
    <text evidence="1">Belongs to the Maf family.</text>
</comment>
<feature type="chain" id="PRO_1000060946" description="Nucleoside triphosphate pyrophosphatase">
    <location>
        <begin position="1"/>
        <end position="222"/>
    </location>
</feature>
<feature type="active site" description="Proton acceptor" evidence="1">
    <location>
        <position position="82"/>
    </location>
</feature>
<protein>
    <recommendedName>
        <fullName evidence="1">Nucleoside triphosphate pyrophosphatase</fullName>
        <ecNumber evidence="1">3.6.1.9</ecNumber>
    </recommendedName>
    <alternativeName>
        <fullName evidence="1">Nucleotide pyrophosphatase</fullName>
        <shortName evidence="1">Nucleotide PPase</shortName>
    </alternativeName>
</protein>
<organism>
    <name type="scientific">Mycobacterium bovis (strain BCG / Pasteur 1173P2)</name>
    <dbReference type="NCBI Taxonomy" id="410289"/>
    <lineage>
        <taxon>Bacteria</taxon>
        <taxon>Bacillati</taxon>
        <taxon>Actinomycetota</taxon>
        <taxon>Actinomycetes</taxon>
        <taxon>Mycobacteriales</taxon>
        <taxon>Mycobacteriaceae</taxon>
        <taxon>Mycobacterium</taxon>
        <taxon>Mycobacterium tuberculosis complex</taxon>
    </lineage>
</organism>
<name>NTPP_MYCBP</name>
<reference key="1">
    <citation type="journal article" date="2007" name="Proc. Natl. Acad. Sci. U.S.A.">
        <title>Genome plasticity of BCG and impact on vaccine efficacy.</title>
        <authorList>
            <person name="Brosch R."/>
            <person name="Gordon S.V."/>
            <person name="Garnier T."/>
            <person name="Eiglmeier K."/>
            <person name="Frigui W."/>
            <person name="Valenti P."/>
            <person name="Dos Santos S."/>
            <person name="Duthoy S."/>
            <person name="Lacroix C."/>
            <person name="Garcia-Pelayo C."/>
            <person name="Inwald J.K."/>
            <person name="Golby P."/>
            <person name="Garcia J.N."/>
            <person name="Hewinson R.G."/>
            <person name="Behr M.A."/>
            <person name="Quail M.A."/>
            <person name="Churcher C."/>
            <person name="Barrell B.G."/>
            <person name="Parkhill J."/>
            <person name="Cole S.T."/>
        </authorList>
    </citation>
    <scope>NUCLEOTIDE SEQUENCE [LARGE SCALE GENOMIC DNA]</scope>
    <source>
        <strain>BCG / Pasteur 1173P2</strain>
    </source>
</reference>
<sequence length="222" mass="23026">MTRLVLGSASPGRLKVLRDAGIEPLVIASHVDEDVVIAALGPDAVPSDVVCVLAAAKAAQVATTLTGTQRIVAADCVVVACDSMLYIEGRLLGKPASIDEAREQWRSMAGRAGQLYTGHGVIRLQDNKTVYRSAETAITTVYFGTPSASDLEAYLASGESLRVAGGFTLDGLGGWFIDGVQGNPSNVIGLSLPLLRSLVQRCGLSVAALWAGNAGGPAHKQQ</sequence>
<evidence type="ECO:0000255" key="1">
    <source>
        <dbReference type="HAMAP-Rule" id="MF_00528"/>
    </source>
</evidence>
<keyword id="KW-0963">Cytoplasm</keyword>
<keyword id="KW-0378">Hydrolase</keyword>
<keyword id="KW-0546">Nucleotide metabolism</keyword>
<dbReference type="EC" id="3.6.1.9" evidence="1"/>
<dbReference type="EMBL" id="AM408590">
    <property type="protein sequence ID" value="CAL73300.1"/>
    <property type="molecule type" value="Genomic_DNA"/>
</dbReference>
<dbReference type="RefSeq" id="WP_010950862.1">
    <property type="nucleotide sequence ID" value="NC_008769.1"/>
</dbReference>
<dbReference type="SMR" id="A1KNT4"/>
<dbReference type="KEGG" id="mbb:BCG_3311"/>
<dbReference type="HOGENOM" id="CLU_040416_1_2_11"/>
<dbReference type="Proteomes" id="UP000001472">
    <property type="component" value="Chromosome"/>
</dbReference>
<dbReference type="GO" id="GO:0005737">
    <property type="term" value="C:cytoplasm"/>
    <property type="evidence" value="ECO:0007669"/>
    <property type="project" value="UniProtKB-SubCell"/>
</dbReference>
<dbReference type="GO" id="GO:0047429">
    <property type="term" value="F:nucleoside triphosphate diphosphatase activity"/>
    <property type="evidence" value="ECO:0007669"/>
    <property type="project" value="UniProtKB-EC"/>
</dbReference>
<dbReference type="GO" id="GO:0009117">
    <property type="term" value="P:nucleotide metabolic process"/>
    <property type="evidence" value="ECO:0007669"/>
    <property type="project" value="UniProtKB-KW"/>
</dbReference>
<dbReference type="CDD" id="cd00555">
    <property type="entry name" value="Maf"/>
    <property type="match status" value="1"/>
</dbReference>
<dbReference type="FunFam" id="3.90.950.10:FF:000010">
    <property type="entry name" value="Nucleoside triphosphate pyrophosphatase"/>
    <property type="match status" value="1"/>
</dbReference>
<dbReference type="Gene3D" id="3.90.950.10">
    <property type="match status" value="1"/>
</dbReference>
<dbReference type="HAMAP" id="MF_00528">
    <property type="entry name" value="Maf"/>
    <property type="match status" value="1"/>
</dbReference>
<dbReference type="InterPro" id="IPR029001">
    <property type="entry name" value="ITPase-like_fam"/>
</dbReference>
<dbReference type="InterPro" id="IPR003697">
    <property type="entry name" value="Maf-like"/>
</dbReference>
<dbReference type="NCBIfam" id="TIGR00172">
    <property type="entry name" value="maf"/>
    <property type="match status" value="1"/>
</dbReference>
<dbReference type="PANTHER" id="PTHR43213">
    <property type="entry name" value="BIFUNCTIONAL DTTP/UTP PYROPHOSPHATASE/METHYLTRANSFERASE PROTEIN-RELATED"/>
    <property type="match status" value="1"/>
</dbReference>
<dbReference type="PANTHER" id="PTHR43213:SF5">
    <property type="entry name" value="BIFUNCTIONAL DTTP_UTP PYROPHOSPHATASE_METHYLTRANSFERASE PROTEIN-RELATED"/>
    <property type="match status" value="1"/>
</dbReference>
<dbReference type="Pfam" id="PF02545">
    <property type="entry name" value="Maf"/>
    <property type="match status" value="1"/>
</dbReference>
<dbReference type="PIRSF" id="PIRSF006305">
    <property type="entry name" value="Maf"/>
    <property type="match status" value="1"/>
</dbReference>
<dbReference type="SUPFAM" id="SSF52972">
    <property type="entry name" value="ITPase-like"/>
    <property type="match status" value="1"/>
</dbReference>